<organism>
    <name type="scientific">Pseudomonas entomophila (strain L48)</name>
    <dbReference type="NCBI Taxonomy" id="384676"/>
    <lineage>
        <taxon>Bacteria</taxon>
        <taxon>Pseudomonadati</taxon>
        <taxon>Pseudomonadota</taxon>
        <taxon>Gammaproteobacteria</taxon>
        <taxon>Pseudomonadales</taxon>
        <taxon>Pseudomonadaceae</taxon>
        <taxon>Pseudomonas</taxon>
    </lineage>
</organism>
<feature type="chain" id="PRO_1000012563" description="Soluble pyridine nucleotide transhydrogenase">
    <location>
        <begin position="1"/>
        <end position="464"/>
    </location>
</feature>
<feature type="binding site" evidence="1">
    <location>
        <begin position="35"/>
        <end position="44"/>
    </location>
    <ligand>
        <name>FAD</name>
        <dbReference type="ChEBI" id="CHEBI:57692"/>
    </ligand>
</feature>
<gene>
    <name evidence="1" type="primary">sthA</name>
    <name type="ordered locus">PSEEN3711</name>
</gene>
<comment type="function">
    <text evidence="1">Conversion of NADPH, generated by peripheral catabolic pathways, to NADH, which can enter the respiratory chain for energy generation.</text>
</comment>
<comment type="catalytic activity">
    <reaction evidence="1">
        <text>NAD(+) + NADPH = NADH + NADP(+)</text>
        <dbReference type="Rhea" id="RHEA:11692"/>
        <dbReference type="ChEBI" id="CHEBI:57540"/>
        <dbReference type="ChEBI" id="CHEBI:57783"/>
        <dbReference type="ChEBI" id="CHEBI:57945"/>
        <dbReference type="ChEBI" id="CHEBI:58349"/>
        <dbReference type="EC" id="1.6.1.1"/>
    </reaction>
</comment>
<comment type="cofactor">
    <cofactor evidence="1">
        <name>FAD</name>
        <dbReference type="ChEBI" id="CHEBI:57692"/>
    </cofactor>
    <text evidence="1">Binds 1 FAD per subunit.</text>
</comment>
<comment type="subcellular location">
    <subcellularLocation>
        <location evidence="1">Cytoplasm</location>
    </subcellularLocation>
</comment>
<comment type="similarity">
    <text evidence="1">Belongs to the class-I pyridine nucleotide-disulfide oxidoreductase family.</text>
</comment>
<keyword id="KW-0963">Cytoplasm</keyword>
<keyword id="KW-0274">FAD</keyword>
<keyword id="KW-0285">Flavoprotein</keyword>
<keyword id="KW-0520">NAD</keyword>
<keyword id="KW-0521">NADP</keyword>
<keyword id="KW-0560">Oxidoreductase</keyword>
<protein>
    <recommendedName>
        <fullName evidence="1">Soluble pyridine nucleotide transhydrogenase</fullName>
        <shortName evidence="1">STH</shortName>
        <ecNumber evidence="1">1.6.1.1</ecNumber>
    </recommendedName>
    <alternativeName>
        <fullName evidence="1">NAD(P)(+) transhydrogenase [B-specific]</fullName>
    </alternativeName>
</protein>
<reference key="1">
    <citation type="journal article" date="2006" name="Nat. Biotechnol.">
        <title>Complete genome sequence of the entomopathogenic and metabolically versatile soil bacterium Pseudomonas entomophila.</title>
        <authorList>
            <person name="Vodovar N."/>
            <person name="Vallenet D."/>
            <person name="Cruveiller S."/>
            <person name="Rouy Z."/>
            <person name="Barbe V."/>
            <person name="Acosta C."/>
            <person name="Cattolico L."/>
            <person name="Jubin C."/>
            <person name="Lajus A."/>
            <person name="Segurens B."/>
            <person name="Vacherie B."/>
            <person name="Wincker P."/>
            <person name="Weissenbach J."/>
            <person name="Lemaitre B."/>
            <person name="Medigue C."/>
            <person name="Boccard F."/>
        </authorList>
    </citation>
    <scope>NUCLEOTIDE SEQUENCE [LARGE SCALE GENOMIC DNA]</scope>
    <source>
        <strain>L48</strain>
    </source>
</reference>
<name>STHA_PSEE4</name>
<proteinExistence type="inferred from homology"/>
<evidence type="ECO:0000255" key="1">
    <source>
        <dbReference type="HAMAP-Rule" id="MF_00247"/>
    </source>
</evidence>
<accession>Q1I7F0</accession>
<dbReference type="EC" id="1.6.1.1" evidence="1"/>
<dbReference type="EMBL" id="CT573326">
    <property type="protein sequence ID" value="CAK16432.1"/>
    <property type="molecule type" value="Genomic_DNA"/>
</dbReference>
<dbReference type="RefSeq" id="WP_011534809.1">
    <property type="nucleotide sequence ID" value="NC_008027.1"/>
</dbReference>
<dbReference type="SMR" id="Q1I7F0"/>
<dbReference type="STRING" id="384676.PSEEN3711"/>
<dbReference type="GeneID" id="32806757"/>
<dbReference type="KEGG" id="pen:PSEEN3711"/>
<dbReference type="eggNOG" id="COG1249">
    <property type="taxonomic scope" value="Bacteria"/>
</dbReference>
<dbReference type="HOGENOM" id="CLU_016755_0_0_6"/>
<dbReference type="OrthoDB" id="9800167at2"/>
<dbReference type="Proteomes" id="UP000000658">
    <property type="component" value="Chromosome"/>
</dbReference>
<dbReference type="GO" id="GO:0005829">
    <property type="term" value="C:cytosol"/>
    <property type="evidence" value="ECO:0007669"/>
    <property type="project" value="TreeGrafter"/>
</dbReference>
<dbReference type="GO" id="GO:0004148">
    <property type="term" value="F:dihydrolipoyl dehydrogenase (NADH) activity"/>
    <property type="evidence" value="ECO:0007669"/>
    <property type="project" value="TreeGrafter"/>
</dbReference>
<dbReference type="GO" id="GO:0050660">
    <property type="term" value="F:flavin adenine dinucleotide binding"/>
    <property type="evidence" value="ECO:0007669"/>
    <property type="project" value="TreeGrafter"/>
</dbReference>
<dbReference type="GO" id="GO:0003957">
    <property type="term" value="F:NAD(P)+ transhydrogenase (Si-specific) activity"/>
    <property type="evidence" value="ECO:0007669"/>
    <property type="project" value="UniProtKB-UniRule"/>
</dbReference>
<dbReference type="GO" id="GO:0006103">
    <property type="term" value="P:2-oxoglutarate metabolic process"/>
    <property type="evidence" value="ECO:0007669"/>
    <property type="project" value="TreeGrafter"/>
</dbReference>
<dbReference type="GO" id="GO:0006739">
    <property type="term" value="P:NADP metabolic process"/>
    <property type="evidence" value="ECO:0007669"/>
    <property type="project" value="UniProtKB-UniRule"/>
</dbReference>
<dbReference type="FunFam" id="3.30.390.30:FF:000002">
    <property type="entry name" value="Soluble pyridine nucleotide transhydrogenase"/>
    <property type="match status" value="1"/>
</dbReference>
<dbReference type="FunFam" id="3.50.50.60:FF:000008">
    <property type="entry name" value="Soluble pyridine nucleotide transhydrogenase"/>
    <property type="match status" value="1"/>
</dbReference>
<dbReference type="Gene3D" id="3.30.390.30">
    <property type="match status" value="1"/>
</dbReference>
<dbReference type="Gene3D" id="3.50.50.60">
    <property type="entry name" value="FAD/NAD(P)-binding domain"/>
    <property type="match status" value="2"/>
</dbReference>
<dbReference type="HAMAP" id="MF_00247">
    <property type="entry name" value="SthA"/>
    <property type="match status" value="1"/>
</dbReference>
<dbReference type="InterPro" id="IPR050151">
    <property type="entry name" value="Class-I_Pyr_Nuc-Dis_Oxidored"/>
</dbReference>
<dbReference type="InterPro" id="IPR036188">
    <property type="entry name" value="FAD/NAD-bd_sf"/>
</dbReference>
<dbReference type="InterPro" id="IPR023753">
    <property type="entry name" value="FAD/NAD-binding_dom"/>
</dbReference>
<dbReference type="InterPro" id="IPR016156">
    <property type="entry name" value="FAD/NAD-linked_Rdtase_dimer_sf"/>
</dbReference>
<dbReference type="InterPro" id="IPR001100">
    <property type="entry name" value="Pyr_nuc-diS_OxRdtase"/>
</dbReference>
<dbReference type="InterPro" id="IPR004099">
    <property type="entry name" value="Pyr_nucl-diS_OxRdtase_dimer"/>
</dbReference>
<dbReference type="InterPro" id="IPR022962">
    <property type="entry name" value="STH_gammaproteobact"/>
</dbReference>
<dbReference type="NCBIfam" id="NF003585">
    <property type="entry name" value="PRK05249.1"/>
    <property type="match status" value="1"/>
</dbReference>
<dbReference type="PANTHER" id="PTHR22912">
    <property type="entry name" value="DISULFIDE OXIDOREDUCTASE"/>
    <property type="match status" value="1"/>
</dbReference>
<dbReference type="PANTHER" id="PTHR22912:SF93">
    <property type="entry name" value="SOLUBLE PYRIDINE NUCLEOTIDE TRANSHYDROGENASE"/>
    <property type="match status" value="1"/>
</dbReference>
<dbReference type="Pfam" id="PF07992">
    <property type="entry name" value="Pyr_redox_2"/>
    <property type="match status" value="1"/>
</dbReference>
<dbReference type="Pfam" id="PF02852">
    <property type="entry name" value="Pyr_redox_dim"/>
    <property type="match status" value="1"/>
</dbReference>
<dbReference type="PIRSF" id="PIRSF000350">
    <property type="entry name" value="Mercury_reductase_MerA"/>
    <property type="match status" value="1"/>
</dbReference>
<dbReference type="PRINTS" id="PR00368">
    <property type="entry name" value="FADPNR"/>
</dbReference>
<dbReference type="PRINTS" id="PR00411">
    <property type="entry name" value="PNDRDTASEI"/>
</dbReference>
<dbReference type="SUPFAM" id="SSF51905">
    <property type="entry name" value="FAD/NAD(P)-binding domain"/>
    <property type="match status" value="1"/>
</dbReference>
<dbReference type="SUPFAM" id="SSF55424">
    <property type="entry name" value="FAD/NAD-linked reductases, dimerisation (C-terminal) domain"/>
    <property type="match status" value="1"/>
</dbReference>
<sequence length="464" mass="50927">MAVYNYDVVVLGSGPAGEGAAMNAAKAGRKVAMVDSRRQVGGNCTHLGTIPSKALRHSVRQIMQFNTNPMFRAIGEPRWFSFPDVLKSAEKVISKQVASRTGYYARNRVDVFFGTGSFADEQTVEVVCPNGVVEKLVAKHIIIATGSRPYRPADIDFHHPRVYDSDTILSLSHTPRKLIVYGAGVIGCEYASIFSGLGVLVELVDNRGQLLSFLDSEISQALSYHFSNNNITVRHNEEYERVEGLDNGVVLHLKSGKKIKADALLWCNGRTGNTDRLGLENIGIKVNSRGQIEVDQAYRTSVPNIYGAGDVIGWPSLASAAHDQGRSAAGSIVDNGSWRFVDDVPTGIYTIPEISSIGKNEQELTQAKVPYEVGKAFFKSMARAQIAGEPQGMLKILFHRETLEILGVHCFGYQASEIVHIGQAIMNQPGEQNNLKYFVNTTFNYPTMAEAYRVAAYDGLNRLF</sequence>